<protein>
    <recommendedName>
        <fullName evidence="1">Large ribosomal subunit protein bL34</fullName>
    </recommendedName>
    <alternativeName>
        <fullName evidence="3">50S ribosomal protein L34</fullName>
    </alternativeName>
</protein>
<name>RL34_STACT</name>
<dbReference type="EMBL" id="AM295250">
    <property type="protein sequence ID" value="CAL26916.1"/>
    <property type="molecule type" value="Genomic_DNA"/>
</dbReference>
<dbReference type="RefSeq" id="WP_000240855.1">
    <property type="nucleotide sequence ID" value="NC_012121.1"/>
</dbReference>
<dbReference type="SMR" id="B9DI93"/>
<dbReference type="GeneID" id="98347025"/>
<dbReference type="KEGG" id="sca:SCA_0001"/>
<dbReference type="eggNOG" id="COG0230">
    <property type="taxonomic scope" value="Bacteria"/>
</dbReference>
<dbReference type="HOGENOM" id="CLU_129938_2_0_9"/>
<dbReference type="BioCyc" id="SCAR396513:SCA_RS00005-MONOMER"/>
<dbReference type="Proteomes" id="UP000000444">
    <property type="component" value="Chromosome"/>
</dbReference>
<dbReference type="GO" id="GO:1990904">
    <property type="term" value="C:ribonucleoprotein complex"/>
    <property type="evidence" value="ECO:0007669"/>
    <property type="project" value="UniProtKB-KW"/>
</dbReference>
<dbReference type="GO" id="GO:0005840">
    <property type="term" value="C:ribosome"/>
    <property type="evidence" value="ECO:0007669"/>
    <property type="project" value="UniProtKB-KW"/>
</dbReference>
<dbReference type="GO" id="GO:0003735">
    <property type="term" value="F:structural constituent of ribosome"/>
    <property type="evidence" value="ECO:0007669"/>
    <property type="project" value="InterPro"/>
</dbReference>
<dbReference type="GO" id="GO:0006412">
    <property type="term" value="P:translation"/>
    <property type="evidence" value="ECO:0007669"/>
    <property type="project" value="UniProtKB-UniRule"/>
</dbReference>
<dbReference type="FunFam" id="1.10.287.3980:FF:000001">
    <property type="entry name" value="Mitochondrial ribosomal protein L34"/>
    <property type="match status" value="1"/>
</dbReference>
<dbReference type="Gene3D" id="1.10.287.3980">
    <property type="match status" value="1"/>
</dbReference>
<dbReference type="HAMAP" id="MF_00391">
    <property type="entry name" value="Ribosomal_bL34"/>
    <property type="match status" value="1"/>
</dbReference>
<dbReference type="InterPro" id="IPR000271">
    <property type="entry name" value="Ribosomal_bL34"/>
</dbReference>
<dbReference type="InterPro" id="IPR020939">
    <property type="entry name" value="Ribosomal_bL34_CS"/>
</dbReference>
<dbReference type="NCBIfam" id="TIGR01030">
    <property type="entry name" value="rpmH_bact"/>
    <property type="match status" value="1"/>
</dbReference>
<dbReference type="PANTHER" id="PTHR14503:SF4">
    <property type="entry name" value="LARGE RIBOSOMAL SUBUNIT PROTEIN BL34M"/>
    <property type="match status" value="1"/>
</dbReference>
<dbReference type="PANTHER" id="PTHR14503">
    <property type="entry name" value="MITOCHONDRIAL RIBOSOMAL PROTEIN 34 FAMILY MEMBER"/>
    <property type="match status" value="1"/>
</dbReference>
<dbReference type="Pfam" id="PF00468">
    <property type="entry name" value="Ribosomal_L34"/>
    <property type="match status" value="1"/>
</dbReference>
<dbReference type="PROSITE" id="PS00784">
    <property type="entry name" value="RIBOSOMAL_L34"/>
    <property type="match status" value="1"/>
</dbReference>
<comment type="similarity">
    <text evidence="1">Belongs to the bacterial ribosomal protein bL34 family.</text>
</comment>
<proteinExistence type="inferred from homology"/>
<feature type="chain" id="PRO_1000196112" description="Large ribosomal subunit protein bL34">
    <location>
        <begin position="1"/>
        <end position="45"/>
    </location>
</feature>
<feature type="region of interest" description="Disordered" evidence="2">
    <location>
        <begin position="1"/>
        <end position="45"/>
    </location>
</feature>
<organism>
    <name type="scientific">Staphylococcus carnosus (strain TM300)</name>
    <dbReference type="NCBI Taxonomy" id="396513"/>
    <lineage>
        <taxon>Bacteria</taxon>
        <taxon>Bacillati</taxon>
        <taxon>Bacillota</taxon>
        <taxon>Bacilli</taxon>
        <taxon>Bacillales</taxon>
        <taxon>Staphylococcaceae</taxon>
        <taxon>Staphylococcus</taxon>
    </lineage>
</organism>
<keyword id="KW-1185">Reference proteome</keyword>
<keyword id="KW-0687">Ribonucleoprotein</keyword>
<keyword id="KW-0689">Ribosomal protein</keyword>
<evidence type="ECO:0000255" key="1">
    <source>
        <dbReference type="HAMAP-Rule" id="MF_00391"/>
    </source>
</evidence>
<evidence type="ECO:0000256" key="2">
    <source>
        <dbReference type="SAM" id="MobiDB-lite"/>
    </source>
</evidence>
<evidence type="ECO:0000305" key="3"/>
<sequence length="45" mass="5434">MVKRTYQPNKRKHSKVHGFRKRMSTKNGRKVLARRRRKGRKVLSA</sequence>
<gene>
    <name evidence="1" type="primary">rpmH</name>
    <name type="ordered locus">Sca_0001</name>
</gene>
<accession>B9DI93</accession>
<reference key="1">
    <citation type="journal article" date="2009" name="Appl. Environ. Microbiol.">
        <title>Genome analysis of the meat starter culture bacterium Staphylococcus carnosus TM300.</title>
        <authorList>
            <person name="Rosenstein R."/>
            <person name="Nerz C."/>
            <person name="Biswas L."/>
            <person name="Resch A."/>
            <person name="Raddatz G."/>
            <person name="Schuster S.C."/>
            <person name="Goetz F."/>
        </authorList>
    </citation>
    <scope>NUCLEOTIDE SEQUENCE [LARGE SCALE GENOMIC DNA]</scope>
    <source>
        <strain>TM300</strain>
    </source>
</reference>